<name>ATBP_STAAU</name>
<organism>
    <name type="scientific">Staphylococcus aureus</name>
    <dbReference type="NCBI Taxonomy" id="1280"/>
    <lineage>
        <taxon>Bacteria</taxon>
        <taxon>Bacillati</taxon>
        <taxon>Bacillota</taxon>
        <taxon>Bacilli</taxon>
        <taxon>Bacillales</taxon>
        <taxon>Staphylococcaceae</taxon>
        <taxon>Staphylococcus</taxon>
    </lineage>
</organism>
<protein>
    <recommendedName>
        <fullName>Potential ATP-binding protein</fullName>
    </recommendedName>
    <alternativeName>
        <fullName>ORF 271</fullName>
    </alternativeName>
</protein>
<feature type="chain" id="PRO_0000064719" description="Potential ATP-binding protein">
    <location>
        <begin position="1"/>
        <end position="271"/>
    </location>
</feature>
<feature type="binding site" evidence="1">
    <location>
        <begin position="34"/>
        <end position="41"/>
    </location>
    <ligand>
        <name>ATP</name>
        <dbReference type="ChEBI" id="CHEBI:30616"/>
    </ligand>
</feature>
<sequence>MTKNQNFIETKEYKRFAEFCDACIKYQYIGICYGQPGVGKTLSSRYYTNWNTIEKQVNHRGWEDLASKTTDDILSVNKIFYTRPAEKQTRLSNDLYSISASIDLGQKLHIVNKYGHDHSKHYSDMFKYIDLIIVDEIDRLKVQHLEQLRAIYDEHNLAMIFIGMPGIEKKLSRYPQLYSRIGFAHEFDNLSKDETHHILEYKWQDLGFDLKLEDFTDYEAITTIIKITKGNFRLIHRLFAQIDRIMDINGLDKISTEVVETARDSLVIGIR</sequence>
<reference key="1">
    <citation type="journal article" date="1990" name="Mol. Microbiol.">
        <title>Tn552, a novel transposable element from Staphylococcus aureus.</title>
        <authorList>
            <person name="Rowland S.J."/>
            <person name="Dyke K.G.H."/>
        </authorList>
    </citation>
    <scope>NUCLEOTIDE SEQUENCE [GENOMIC DNA]</scope>
    <source>
        <strain>NCTC 9789 / PS80</strain>
        <transposon>Tn552</transposon>
    </source>
</reference>
<dbReference type="EMBL" id="X52734">
    <property type="protein sequence ID" value="CAA36948.1"/>
    <property type="molecule type" value="Genomic_DNA"/>
</dbReference>
<dbReference type="PIR" id="S11779">
    <property type="entry name" value="S11779"/>
</dbReference>
<dbReference type="SMR" id="P18179"/>
<dbReference type="GO" id="GO:0005524">
    <property type="term" value="F:ATP binding"/>
    <property type="evidence" value="ECO:0007669"/>
    <property type="project" value="UniProtKB-KW"/>
</dbReference>
<dbReference type="GO" id="GO:0016887">
    <property type="term" value="F:ATP hydrolysis activity"/>
    <property type="evidence" value="ECO:0007669"/>
    <property type="project" value="InterPro"/>
</dbReference>
<dbReference type="Gene3D" id="1.10.8.60">
    <property type="match status" value="1"/>
</dbReference>
<dbReference type="Gene3D" id="3.40.50.300">
    <property type="entry name" value="P-loop containing nucleotide triphosphate hydrolases"/>
    <property type="match status" value="1"/>
</dbReference>
<dbReference type="InterPro" id="IPR049945">
    <property type="entry name" value="AAA_22"/>
</dbReference>
<dbReference type="InterPro" id="IPR052026">
    <property type="entry name" value="ExeA_AAA_ATPase_DNA-bind"/>
</dbReference>
<dbReference type="InterPro" id="IPR027417">
    <property type="entry name" value="P-loop_NTPase"/>
</dbReference>
<dbReference type="PANTHER" id="PTHR35894">
    <property type="entry name" value="GENERAL SECRETION PATHWAY PROTEIN A-RELATED"/>
    <property type="match status" value="1"/>
</dbReference>
<dbReference type="PANTHER" id="PTHR35894:SF5">
    <property type="entry name" value="MU-LIKE PROPHAGE FLUMU DNA TRANSPOSITION PROTEIN B"/>
    <property type="match status" value="1"/>
</dbReference>
<dbReference type="Pfam" id="PF13401">
    <property type="entry name" value="AAA_22"/>
    <property type="match status" value="1"/>
</dbReference>
<dbReference type="SUPFAM" id="SSF52540">
    <property type="entry name" value="P-loop containing nucleoside triphosphate hydrolases"/>
    <property type="match status" value="1"/>
</dbReference>
<proteinExistence type="predicted"/>
<accession>P18179</accession>
<evidence type="ECO:0000250" key="1"/>
<keyword id="KW-0067">ATP-binding</keyword>
<keyword id="KW-0547">Nucleotide-binding</keyword>
<keyword id="KW-0814">Transposable element</keyword>